<sequence>MMAPSIDTMAEELDTSITESTMALSVYLLATAFGPLIIGPVSEIYGRKSIFHITNIWFLVWNLVCGFAHSKGLLMAARLLAGFGASAVYSLGYGVLGDVWSAEQRGRSLSLYLLIPLTGSAVGPIVSGFIVKYSTWRWMFWSTAILQLTLDLSSLLFHESYAPLLLRRRAEELRSNTGGSRYHAAIEMREAGLSPPRKLSRSLSRPLRLLAFHPIIQMQAILEGIDYGLLYFALSSFSALHVAAYGESVEISGLHYIVICIGTVSGSQLCGPLMDYAYQRLSSNTGETQVPELRIPLLLPGALITPIGFLLYGWAAQYHLIWVVVDVGAALLSLGMQIFDTTLHAYVMDSYPEHVSSASAATQVLRSLLAFAFPLFSNSLYDSLGYGLGNSLLAFLSIGIALPATGILWRWGATLRGRQQSSY</sequence>
<proteinExistence type="evidence at transcript level"/>
<feature type="chain" id="PRO_0000436131" description="Probable efflux pump mfs2">
    <location>
        <begin position="1"/>
        <end position="423"/>
    </location>
</feature>
<feature type="transmembrane region" description="Helical" evidence="1">
    <location>
        <begin position="21"/>
        <end position="41"/>
    </location>
</feature>
<feature type="transmembrane region" description="Helical" evidence="1">
    <location>
        <begin position="49"/>
        <end position="69"/>
    </location>
</feature>
<feature type="transmembrane region" description="Helical" evidence="1">
    <location>
        <begin position="79"/>
        <end position="99"/>
    </location>
</feature>
<feature type="transmembrane region" description="Helical" evidence="1">
    <location>
        <begin position="111"/>
        <end position="131"/>
    </location>
</feature>
<feature type="transmembrane region" description="Helical" evidence="1">
    <location>
        <begin position="138"/>
        <end position="158"/>
    </location>
</feature>
<feature type="transmembrane region" description="Helical" evidence="1">
    <location>
        <begin position="220"/>
        <end position="240"/>
    </location>
</feature>
<feature type="transmembrane region" description="Helical" evidence="1">
    <location>
        <begin position="256"/>
        <end position="278"/>
    </location>
</feature>
<feature type="transmembrane region" description="Helical" evidence="1">
    <location>
        <begin position="295"/>
        <end position="315"/>
    </location>
</feature>
<feature type="transmembrane region" description="Helical" evidence="1">
    <location>
        <begin position="319"/>
        <end position="339"/>
    </location>
</feature>
<feature type="transmembrane region" description="Helical" evidence="1">
    <location>
        <begin position="360"/>
        <end position="380"/>
    </location>
</feature>
<feature type="transmembrane region" description="Helical" evidence="1">
    <location>
        <begin position="392"/>
        <end position="411"/>
    </location>
</feature>
<evidence type="ECO:0000255" key="1"/>
<evidence type="ECO:0000269" key="2">
    <source>
    </source>
</evidence>
<evidence type="ECO:0000303" key="3">
    <source>
    </source>
</evidence>
<evidence type="ECO:0000305" key="4"/>
<organism>
    <name type="scientific">Aspergillus flavus (strain ATCC 200026 / FGSC A1120 / IAM 13836 / NRRL 3357 / JCM 12722 / SRRC 167)</name>
    <dbReference type="NCBI Taxonomy" id="332952"/>
    <lineage>
        <taxon>Eukaryota</taxon>
        <taxon>Fungi</taxon>
        <taxon>Dikarya</taxon>
        <taxon>Ascomycota</taxon>
        <taxon>Pezizomycotina</taxon>
        <taxon>Eurotiomycetes</taxon>
        <taxon>Eurotiomycetidae</taxon>
        <taxon>Eurotiales</taxon>
        <taxon>Aspergillaceae</taxon>
        <taxon>Aspergillus</taxon>
        <taxon>Aspergillus subgen. Circumdati</taxon>
    </lineage>
</organism>
<accession>B8MYS8</accession>
<dbReference type="EMBL" id="EQ963472">
    <property type="protein sequence ID" value="EED57520.1"/>
    <property type="molecule type" value="Genomic_DNA"/>
</dbReference>
<dbReference type="RefSeq" id="XP_002373132.1">
    <property type="nucleotide sequence ID" value="XM_002373091.1"/>
</dbReference>
<dbReference type="SMR" id="B8MYS8"/>
<dbReference type="STRING" id="332952.B8MYS8"/>
<dbReference type="EnsemblFungi" id="EED57520">
    <property type="protein sequence ID" value="EED57520"/>
    <property type="gene ID" value="AFLA_082170"/>
</dbReference>
<dbReference type="VEuPathDB" id="FungiDB:AFLA_003783"/>
<dbReference type="eggNOG" id="KOG0255">
    <property type="taxonomic scope" value="Eukaryota"/>
</dbReference>
<dbReference type="HOGENOM" id="CLU_008455_1_3_1"/>
<dbReference type="OMA" id="APLMDYW"/>
<dbReference type="GO" id="GO:0016020">
    <property type="term" value="C:membrane"/>
    <property type="evidence" value="ECO:0007669"/>
    <property type="project" value="UniProtKB-SubCell"/>
</dbReference>
<dbReference type="GO" id="GO:0022857">
    <property type="term" value="F:transmembrane transporter activity"/>
    <property type="evidence" value="ECO:0007669"/>
    <property type="project" value="InterPro"/>
</dbReference>
<dbReference type="GO" id="GO:0140115">
    <property type="term" value="P:export across plasma membrane"/>
    <property type="evidence" value="ECO:0007669"/>
    <property type="project" value="UniProtKB-ARBA"/>
</dbReference>
<dbReference type="GO" id="GO:0042908">
    <property type="term" value="P:xenobiotic transport"/>
    <property type="evidence" value="ECO:0007669"/>
    <property type="project" value="UniProtKB-ARBA"/>
</dbReference>
<dbReference type="Gene3D" id="1.20.1250.20">
    <property type="entry name" value="MFS general substrate transporter like domains"/>
    <property type="match status" value="1"/>
</dbReference>
<dbReference type="InterPro" id="IPR011701">
    <property type="entry name" value="MFS"/>
</dbReference>
<dbReference type="InterPro" id="IPR020846">
    <property type="entry name" value="MFS_dom"/>
</dbReference>
<dbReference type="InterPro" id="IPR036259">
    <property type="entry name" value="MFS_trans_sf"/>
</dbReference>
<dbReference type="InterPro" id="IPR005829">
    <property type="entry name" value="Sugar_transporter_CS"/>
</dbReference>
<dbReference type="PANTHER" id="PTHR23502">
    <property type="entry name" value="MAJOR FACILITATOR SUPERFAMILY"/>
    <property type="match status" value="1"/>
</dbReference>
<dbReference type="PANTHER" id="PTHR23502:SF60">
    <property type="entry name" value="MAJOR FACILITATOR SUPERFAMILY (MFS) PROFILE DOMAIN-CONTAINING PROTEIN-RELATED"/>
    <property type="match status" value="1"/>
</dbReference>
<dbReference type="Pfam" id="PF07690">
    <property type="entry name" value="MFS_1"/>
    <property type="match status" value="1"/>
</dbReference>
<dbReference type="SUPFAM" id="SSF103473">
    <property type="entry name" value="MFS general substrate transporter"/>
    <property type="match status" value="1"/>
</dbReference>
<dbReference type="PROSITE" id="PS50850">
    <property type="entry name" value="MFS"/>
    <property type="match status" value="1"/>
</dbReference>
<dbReference type="PROSITE" id="PS00216">
    <property type="entry name" value="SUGAR_TRANSPORT_1"/>
    <property type="match status" value="1"/>
</dbReference>
<comment type="function">
    <text evidence="2">Probable efflux pump; part of the gene cluster 27 that mediates the biosynthesis of asparasone A, a sclerotium-specific anthraquinone pigment important for sclerotial survival (PubMed:24412484).</text>
</comment>
<comment type="subcellular location">
    <subcellularLocation>
        <location evidence="1">Membrane</location>
        <topology evidence="1">Multi-pass membrane protein</topology>
    </subcellularLocation>
</comment>
<comment type="induction">
    <text evidence="2">Expression is induced by the developmental and secondary metabolism regulator veA (PubMed:24412484).</text>
</comment>
<comment type="similarity">
    <text evidence="4">Belongs to the major facilitator superfamily.</text>
</comment>
<gene>
    <name evidence="3" type="primary">mfs2</name>
    <name type="ORF">AFLA_082170</name>
</gene>
<name>MF227_ASPFN</name>
<keyword id="KW-0472">Membrane</keyword>
<keyword id="KW-0812">Transmembrane</keyword>
<keyword id="KW-1133">Transmembrane helix</keyword>
<keyword id="KW-0813">Transport</keyword>
<reference key="1">
    <citation type="journal article" date="2015" name="Genome Announc.">
        <title>Genome sequence of Aspergillus flavus NRRL 3357, a strain that causes aflatoxin contamination of food and feed.</title>
        <authorList>
            <person name="Nierman W.C."/>
            <person name="Yu J."/>
            <person name="Fedorova-Abrams N.D."/>
            <person name="Losada L."/>
            <person name="Cleveland T.E."/>
            <person name="Bhatnagar D."/>
            <person name="Bennett J.W."/>
            <person name="Dean R."/>
            <person name="Payne G.A."/>
        </authorList>
    </citation>
    <scope>NUCLEOTIDE SEQUENCE [LARGE SCALE GENOMIC DNA]</scope>
    <source>
        <strain>ATCC 200026 / FGSC A1120 / IAM 13836 / NRRL 3357 / JCM 12722 / SRRC 167</strain>
    </source>
</reference>
<reference key="2">
    <citation type="journal article" date="2014" name="Fungal Genet. Biol.">
        <title>Functional characterization of a veA-dependent polyketide synthase gene in Aspergillus flavus necessary for the synthesis of asparasone, a sclerotium-specific pigment.</title>
        <authorList>
            <person name="Cary J.W."/>
            <person name="Harris-Coward P.Y."/>
            <person name="Ehrlich K.C."/>
            <person name="Di Mavungu J.D."/>
            <person name="Malysheva S.V."/>
            <person name="De Saeger S."/>
            <person name="Dowd P.F."/>
            <person name="Shantappa S."/>
            <person name="Martens S.L."/>
            <person name="Calvo A.M."/>
        </authorList>
    </citation>
    <scope>INDUCTION</scope>
</reference>
<protein>
    <recommendedName>
        <fullName evidence="4">Probable efflux pump mfs2</fullName>
    </recommendedName>
    <alternativeName>
        <fullName evidence="4">Asparasone A synthesis protein mfs2</fullName>
    </alternativeName>
</protein>